<evidence type="ECO:0000250" key="1"/>
<evidence type="ECO:0000255" key="2">
    <source>
        <dbReference type="PROSITE-ProRule" id="PRU01182"/>
    </source>
</evidence>
<evidence type="ECO:0000305" key="3"/>
<accession>Q6BRJ9</accession>
<keyword id="KW-0963">Cytoplasm</keyword>
<keyword id="KW-0256">Endoplasmic reticulum</keyword>
<keyword id="KW-0472">Membrane</keyword>
<keyword id="KW-0509">mRNA transport</keyword>
<keyword id="KW-0539">Nucleus</keyword>
<keyword id="KW-0653">Protein transport</keyword>
<keyword id="KW-1185">Reference proteome</keyword>
<keyword id="KW-0811">Translocation</keyword>
<keyword id="KW-0813">Transport</keyword>
<organism>
    <name type="scientific">Debaryomyces hansenii (strain ATCC 36239 / CBS 767 / BCRC 21394 / JCM 1990 / NBRC 0083 / IGC 2968)</name>
    <name type="common">Yeast</name>
    <name type="synonym">Torulaspora hansenii</name>
    <dbReference type="NCBI Taxonomy" id="284592"/>
    <lineage>
        <taxon>Eukaryota</taxon>
        <taxon>Fungi</taxon>
        <taxon>Dikarya</taxon>
        <taxon>Ascomycota</taxon>
        <taxon>Saccharomycotina</taxon>
        <taxon>Pichiomycetes</taxon>
        <taxon>Debaryomycetaceae</taxon>
        <taxon>Debaryomyces</taxon>
    </lineage>
</organism>
<protein>
    <recommendedName>
        <fullName>Nuclear protein localization protein 4</fullName>
    </recommendedName>
</protein>
<reference key="1">
    <citation type="journal article" date="2004" name="Nature">
        <title>Genome evolution in yeasts.</title>
        <authorList>
            <person name="Dujon B."/>
            <person name="Sherman D."/>
            <person name="Fischer G."/>
            <person name="Durrens P."/>
            <person name="Casaregola S."/>
            <person name="Lafontaine I."/>
            <person name="de Montigny J."/>
            <person name="Marck C."/>
            <person name="Neuveglise C."/>
            <person name="Talla E."/>
            <person name="Goffard N."/>
            <person name="Frangeul L."/>
            <person name="Aigle M."/>
            <person name="Anthouard V."/>
            <person name="Babour A."/>
            <person name="Barbe V."/>
            <person name="Barnay S."/>
            <person name="Blanchin S."/>
            <person name="Beckerich J.-M."/>
            <person name="Beyne E."/>
            <person name="Bleykasten C."/>
            <person name="Boisrame A."/>
            <person name="Boyer J."/>
            <person name="Cattolico L."/>
            <person name="Confanioleri F."/>
            <person name="de Daruvar A."/>
            <person name="Despons L."/>
            <person name="Fabre E."/>
            <person name="Fairhead C."/>
            <person name="Ferry-Dumazet H."/>
            <person name="Groppi A."/>
            <person name="Hantraye F."/>
            <person name="Hennequin C."/>
            <person name="Jauniaux N."/>
            <person name="Joyet P."/>
            <person name="Kachouri R."/>
            <person name="Kerrest A."/>
            <person name="Koszul R."/>
            <person name="Lemaire M."/>
            <person name="Lesur I."/>
            <person name="Ma L."/>
            <person name="Muller H."/>
            <person name="Nicaud J.-M."/>
            <person name="Nikolski M."/>
            <person name="Oztas S."/>
            <person name="Ozier-Kalogeropoulos O."/>
            <person name="Pellenz S."/>
            <person name="Potier S."/>
            <person name="Richard G.-F."/>
            <person name="Straub M.-L."/>
            <person name="Suleau A."/>
            <person name="Swennen D."/>
            <person name="Tekaia F."/>
            <person name="Wesolowski-Louvel M."/>
            <person name="Westhof E."/>
            <person name="Wirth B."/>
            <person name="Zeniou-Meyer M."/>
            <person name="Zivanovic Y."/>
            <person name="Bolotin-Fukuhara M."/>
            <person name="Thierry A."/>
            <person name="Bouchier C."/>
            <person name="Caudron B."/>
            <person name="Scarpelli C."/>
            <person name="Gaillardin C."/>
            <person name="Weissenbach J."/>
            <person name="Wincker P."/>
            <person name="Souciet J.-L."/>
        </authorList>
    </citation>
    <scope>NUCLEOTIDE SEQUENCE [LARGE SCALE GENOMIC DNA]</scope>
    <source>
        <strain>ATCC 36239 / CBS 767 / BCRC 21394 / JCM 1990 / NBRC 0083 / IGC 2968</strain>
    </source>
</reference>
<comment type="function">
    <text evidence="1">Involved in the import of nuclear-targeted proteins into the nucleus and the export of poly(A) RNA out of the nucleus. Has a role in the endoplasmic reticulum-associated degradation (ERAD) pathway (By similarity).</text>
</comment>
<comment type="subcellular location">
    <subcellularLocation>
        <location evidence="1">Cytoplasm</location>
        <location evidence="1">Perinuclear region</location>
    </subcellularLocation>
    <subcellularLocation>
        <location evidence="1">Endoplasmic reticulum membrane</location>
        <topology evidence="1">Peripheral membrane protein</topology>
        <orientation evidence="1">Cytoplasmic side</orientation>
    </subcellularLocation>
    <subcellularLocation>
        <location evidence="1">Nucleus membrane</location>
        <topology evidence="1">Peripheral membrane protein</topology>
        <orientation evidence="1">Cytoplasmic side</orientation>
    </subcellularLocation>
    <text evidence="1">Localizes mainly at the nuclear periphery and the endoplasmic reticulum membrane.</text>
</comment>
<comment type="similarity">
    <text evidence="3">Belongs to the NPL4 family.</text>
</comment>
<comment type="sequence caution" evidence="3">
    <conflict type="erroneous initiation">
        <sequence resource="EMBL-CDS" id="CAG87342"/>
    </conflict>
</comment>
<feature type="chain" id="PRO_0000339444" description="Nuclear protein localization protein 4">
    <location>
        <begin position="1"/>
        <end position="566"/>
    </location>
</feature>
<feature type="domain" description="MPN" evidence="2">
    <location>
        <begin position="238"/>
        <end position="375"/>
    </location>
</feature>
<proteinExistence type="inferred from homology"/>
<dbReference type="EMBL" id="CR382136">
    <property type="protein sequence ID" value="CAG87342.2"/>
    <property type="status" value="ALT_INIT"/>
    <property type="molecule type" value="Genomic_DNA"/>
</dbReference>
<dbReference type="RefSeq" id="XP_459171.2">
    <property type="nucleotide sequence ID" value="XM_459171.2"/>
</dbReference>
<dbReference type="SMR" id="Q6BRJ9"/>
<dbReference type="FunCoup" id="Q6BRJ9">
    <property type="interactions" value="985"/>
</dbReference>
<dbReference type="STRING" id="284592.Q6BRJ9"/>
<dbReference type="GeneID" id="2901287"/>
<dbReference type="KEGG" id="dha:DEHA2D15818g"/>
<dbReference type="eggNOG" id="KOG2834">
    <property type="taxonomic scope" value="Eukaryota"/>
</dbReference>
<dbReference type="HOGENOM" id="CLU_017172_0_0_1"/>
<dbReference type="InParanoid" id="Q6BRJ9"/>
<dbReference type="OrthoDB" id="10251089at2759"/>
<dbReference type="Proteomes" id="UP000000599">
    <property type="component" value="Chromosome D"/>
</dbReference>
<dbReference type="GO" id="GO:0005789">
    <property type="term" value="C:endoplasmic reticulum membrane"/>
    <property type="evidence" value="ECO:0007669"/>
    <property type="project" value="UniProtKB-SubCell"/>
</dbReference>
<dbReference type="GO" id="GO:0031965">
    <property type="term" value="C:nuclear membrane"/>
    <property type="evidence" value="ECO:0007669"/>
    <property type="project" value="UniProtKB-SubCell"/>
</dbReference>
<dbReference type="GO" id="GO:0048471">
    <property type="term" value="C:perinuclear region of cytoplasm"/>
    <property type="evidence" value="ECO:0007669"/>
    <property type="project" value="UniProtKB-SubCell"/>
</dbReference>
<dbReference type="GO" id="GO:0043130">
    <property type="term" value="F:ubiquitin binding"/>
    <property type="evidence" value="ECO:0007669"/>
    <property type="project" value="TreeGrafter"/>
</dbReference>
<dbReference type="GO" id="GO:0031625">
    <property type="term" value="F:ubiquitin protein ligase binding"/>
    <property type="evidence" value="ECO:0007669"/>
    <property type="project" value="TreeGrafter"/>
</dbReference>
<dbReference type="GO" id="GO:0051028">
    <property type="term" value="P:mRNA transport"/>
    <property type="evidence" value="ECO:0007669"/>
    <property type="project" value="UniProtKB-KW"/>
</dbReference>
<dbReference type="GO" id="GO:0015031">
    <property type="term" value="P:protein transport"/>
    <property type="evidence" value="ECO:0007669"/>
    <property type="project" value="UniProtKB-KW"/>
</dbReference>
<dbReference type="GO" id="GO:0006511">
    <property type="term" value="P:ubiquitin-dependent protein catabolic process"/>
    <property type="evidence" value="ECO:0007669"/>
    <property type="project" value="InterPro"/>
</dbReference>
<dbReference type="CDD" id="cd08061">
    <property type="entry name" value="MPN_NPL4"/>
    <property type="match status" value="1"/>
</dbReference>
<dbReference type="InterPro" id="IPR037518">
    <property type="entry name" value="MPN"/>
</dbReference>
<dbReference type="InterPro" id="IPR016563">
    <property type="entry name" value="Npl4"/>
</dbReference>
<dbReference type="InterPro" id="IPR007717">
    <property type="entry name" value="NPL4_C"/>
</dbReference>
<dbReference type="InterPro" id="IPR007716">
    <property type="entry name" value="NPL4_Zn-bd_put"/>
</dbReference>
<dbReference type="PANTHER" id="PTHR12710">
    <property type="entry name" value="NUCLEAR PROTEIN LOCALIZATION 4"/>
    <property type="match status" value="1"/>
</dbReference>
<dbReference type="PANTHER" id="PTHR12710:SF0">
    <property type="entry name" value="NUCLEAR PROTEIN LOCALIZATION PROTEIN 4 HOMOLOG"/>
    <property type="match status" value="1"/>
</dbReference>
<dbReference type="Pfam" id="PF05021">
    <property type="entry name" value="NPL4"/>
    <property type="match status" value="1"/>
</dbReference>
<dbReference type="Pfam" id="PF05020">
    <property type="entry name" value="zf-NPL4"/>
    <property type="match status" value="1"/>
</dbReference>
<dbReference type="PIRSF" id="PIRSF010052">
    <property type="entry name" value="Polyub_prc_Npl4"/>
    <property type="match status" value="1"/>
</dbReference>
<dbReference type="PROSITE" id="PS50249">
    <property type="entry name" value="MPN"/>
    <property type="match status" value="1"/>
</dbReference>
<gene>
    <name type="primary">NPL4</name>
    <name type="ordered locus">DEHA2D15818g</name>
</gene>
<sequence length="566" mass="63265">MFRINVDAGSDFLLVLEELVGKLSTNDIQSIYISDKPNSKGEQANSLCGRSVNDLGFKNGDLLFVTYESTGEPPKTESSAPLTTAKTTNGANVSINMNDISIPINKGPGPLKVDQLPVDGLLDKEEGMIMRPRSDLCRHGDKGMCEYCSPLPPWDKDYRKEKGFKHMSYHAHLNEINESKNNRNNATSYMAPLEEPNYNINLNCPSGSHAPYPKGICSKCQPPVITLQQQQFRMVDHVEYADSTILNKFIDSWRTTGVQRFGILYGRYEQFDKVPLGIKAVVEAIYEPPQSGELDGLTLLPWENERQVDEIAASLGLYKVGMTFTDLTDSGAKNGTVLCKRHKNSYFLSCLEVIMAAKYQVSNPNITKHSNSGRFSSKFVTCVISGGMNGEIEPRSYQVSNSAEALIKADIITGSTQPSMLYINDSEGKRYVPDVFYSKINEYGLEVKTNAKPAFPVEFLLVSLSDSFPLDPSPMFRENFPIENRDFMGDLQDLKSAYNYLNADPGDGSQLFDFHFLTYIAKTGILSHDELKLVLSYVRNKDQTDYLQLVESPGWMTFITILEQSV</sequence>
<name>NPL4_DEBHA</name>